<comment type="function">
    <text evidence="2">Component of the ubiquinol-cytochrome c reductase complex (complex III or cytochrome b-c1 complex) that is part of the mitochondrial respiratory chain. The b-c1 complex mediates electron transfer from ubiquinol to cytochrome c. Contributes to the generation of a proton gradient across the mitochondrial membrane that is then used for ATP synthesis.</text>
</comment>
<comment type="cofactor">
    <cofactor evidence="2">
        <name>heme b</name>
        <dbReference type="ChEBI" id="CHEBI:60344"/>
    </cofactor>
    <text evidence="2">Binds 2 heme b groups non-covalently.</text>
</comment>
<comment type="subunit">
    <text evidence="2">The cytochrome bc1 complex contains 11 subunits: 3 respiratory subunits (MT-CYB, CYC1 and UQCRFS1), 2 core proteins (UQCRC1 and UQCRC2) and 6 low-molecular weight proteins (UQCRH/QCR6, UQCRB/QCR7, UQCRQ/QCR8, UQCR10/QCR9, UQCR11/QCR10 and a cleavage product of UQCRFS1). This cytochrome bc1 complex then forms a dimer.</text>
</comment>
<comment type="subcellular location">
    <subcellularLocation>
        <location evidence="2">Mitochondrion inner membrane</location>
        <topology evidence="2">Multi-pass membrane protein</topology>
    </subcellularLocation>
</comment>
<comment type="miscellaneous">
    <text evidence="1">Heme 1 (or BL or b562) is low-potential and absorbs at about 562 nm, and heme 2 (or BH or b566) is high-potential and absorbs at about 566 nm.</text>
</comment>
<comment type="similarity">
    <text evidence="3 4">Belongs to the cytochrome b family.</text>
</comment>
<comment type="caution">
    <text evidence="2">The full-length protein contains only eight transmembrane helices, not nine as predicted by bioinformatics tools.</text>
</comment>
<evidence type="ECO:0000250" key="1"/>
<evidence type="ECO:0000250" key="2">
    <source>
        <dbReference type="UniProtKB" id="P00157"/>
    </source>
</evidence>
<evidence type="ECO:0000255" key="3">
    <source>
        <dbReference type="PROSITE-ProRule" id="PRU00967"/>
    </source>
</evidence>
<evidence type="ECO:0000255" key="4">
    <source>
        <dbReference type="PROSITE-ProRule" id="PRU00968"/>
    </source>
</evidence>
<feature type="chain" id="PRO_0000255152" description="Cytochrome b">
    <location>
        <begin position="1"/>
        <end position="379"/>
    </location>
</feature>
<feature type="transmembrane region" description="Helical" evidence="2">
    <location>
        <begin position="33"/>
        <end position="53"/>
    </location>
</feature>
<feature type="transmembrane region" description="Helical" evidence="2">
    <location>
        <begin position="77"/>
        <end position="98"/>
    </location>
</feature>
<feature type="transmembrane region" description="Helical" evidence="2">
    <location>
        <begin position="113"/>
        <end position="133"/>
    </location>
</feature>
<feature type="transmembrane region" description="Helical" evidence="2">
    <location>
        <begin position="178"/>
        <end position="198"/>
    </location>
</feature>
<feature type="transmembrane region" description="Helical" evidence="2">
    <location>
        <begin position="226"/>
        <end position="246"/>
    </location>
</feature>
<feature type="transmembrane region" description="Helical" evidence="2">
    <location>
        <begin position="288"/>
        <end position="308"/>
    </location>
</feature>
<feature type="transmembrane region" description="Helical" evidence="2">
    <location>
        <begin position="320"/>
        <end position="340"/>
    </location>
</feature>
<feature type="transmembrane region" description="Helical" evidence="2">
    <location>
        <begin position="347"/>
        <end position="367"/>
    </location>
</feature>
<feature type="binding site" description="axial binding residue" evidence="2">
    <location>
        <position position="83"/>
    </location>
    <ligand>
        <name>heme b</name>
        <dbReference type="ChEBI" id="CHEBI:60344"/>
        <label>b562</label>
    </ligand>
    <ligandPart>
        <name>Fe</name>
        <dbReference type="ChEBI" id="CHEBI:18248"/>
    </ligandPart>
</feature>
<feature type="binding site" description="axial binding residue" evidence="2">
    <location>
        <position position="97"/>
    </location>
    <ligand>
        <name>heme b</name>
        <dbReference type="ChEBI" id="CHEBI:60344"/>
        <label>b566</label>
    </ligand>
    <ligandPart>
        <name>Fe</name>
        <dbReference type="ChEBI" id="CHEBI:18248"/>
    </ligandPart>
</feature>
<feature type="binding site" description="axial binding residue" evidence="2">
    <location>
        <position position="182"/>
    </location>
    <ligand>
        <name>heme b</name>
        <dbReference type="ChEBI" id="CHEBI:60344"/>
        <label>b562</label>
    </ligand>
    <ligandPart>
        <name>Fe</name>
        <dbReference type="ChEBI" id="CHEBI:18248"/>
    </ligandPart>
</feature>
<feature type="binding site" description="axial binding residue" evidence="2">
    <location>
        <position position="196"/>
    </location>
    <ligand>
        <name>heme b</name>
        <dbReference type="ChEBI" id="CHEBI:60344"/>
        <label>b566</label>
    </ligand>
    <ligandPart>
        <name>Fe</name>
        <dbReference type="ChEBI" id="CHEBI:18248"/>
    </ligandPart>
</feature>
<feature type="binding site" evidence="2">
    <location>
        <position position="201"/>
    </location>
    <ligand>
        <name>a ubiquinone</name>
        <dbReference type="ChEBI" id="CHEBI:16389"/>
    </ligand>
</feature>
<accession>Q36055</accession>
<name>CYB_TRIIH</name>
<geneLocation type="mitochondrion"/>
<dbReference type="EMBL" id="U35171">
    <property type="protein sequence ID" value="AAC52542.1"/>
    <property type="molecule type" value="Genomic_DNA"/>
</dbReference>
<dbReference type="GO" id="GO:0005743">
    <property type="term" value="C:mitochondrial inner membrane"/>
    <property type="evidence" value="ECO:0007669"/>
    <property type="project" value="UniProtKB-SubCell"/>
</dbReference>
<dbReference type="GO" id="GO:0045275">
    <property type="term" value="C:respiratory chain complex III"/>
    <property type="evidence" value="ECO:0007669"/>
    <property type="project" value="InterPro"/>
</dbReference>
<dbReference type="GO" id="GO:0046872">
    <property type="term" value="F:metal ion binding"/>
    <property type="evidence" value="ECO:0007669"/>
    <property type="project" value="UniProtKB-KW"/>
</dbReference>
<dbReference type="GO" id="GO:0008121">
    <property type="term" value="F:ubiquinol-cytochrome-c reductase activity"/>
    <property type="evidence" value="ECO:0007669"/>
    <property type="project" value="InterPro"/>
</dbReference>
<dbReference type="GO" id="GO:0006122">
    <property type="term" value="P:mitochondrial electron transport, ubiquinol to cytochrome c"/>
    <property type="evidence" value="ECO:0007669"/>
    <property type="project" value="TreeGrafter"/>
</dbReference>
<dbReference type="CDD" id="cd00290">
    <property type="entry name" value="cytochrome_b_C"/>
    <property type="match status" value="1"/>
</dbReference>
<dbReference type="CDD" id="cd00284">
    <property type="entry name" value="Cytochrome_b_N"/>
    <property type="match status" value="1"/>
</dbReference>
<dbReference type="FunFam" id="1.20.810.10:FF:000002">
    <property type="entry name" value="Cytochrome b"/>
    <property type="match status" value="1"/>
</dbReference>
<dbReference type="Gene3D" id="1.20.810.10">
    <property type="entry name" value="Cytochrome Bc1 Complex, Chain C"/>
    <property type="match status" value="1"/>
</dbReference>
<dbReference type="InterPro" id="IPR005798">
    <property type="entry name" value="Cyt_b/b6_C"/>
</dbReference>
<dbReference type="InterPro" id="IPR036150">
    <property type="entry name" value="Cyt_b/b6_C_sf"/>
</dbReference>
<dbReference type="InterPro" id="IPR005797">
    <property type="entry name" value="Cyt_b/b6_N"/>
</dbReference>
<dbReference type="InterPro" id="IPR027387">
    <property type="entry name" value="Cytb/b6-like_sf"/>
</dbReference>
<dbReference type="InterPro" id="IPR030689">
    <property type="entry name" value="Cytochrome_b"/>
</dbReference>
<dbReference type="InterPro" id="IPR048260">
    <property type="entry name" value="Cytochrome_b_C_euk/bac"/>
</dbReference>
<dbReference type="InterPro" id="IPR048259">
    <property type="entry name" value="Cytochrome_b_N_euk/bac"/>
</dbReference>
<dbReference type="InterPro" id="IPR016174">
    <property type="entry name" value="Di-haem_cyt_TM"/>
</dbReference>
<dbReference type="PANTHER" id="PTHR19271">
    <property type="entry name" value="CYTOCHROME B"/>
    <property type="match status" value="1"/>
</dbReference>
<dbReference type="PANTHER" id="PTHR19271:SF16">
    <property type="entry name" value="CYTOCHROME B"/>
    <property type="match status" value="1"/>
</dbReference>
<dbReference type="Pfam" id="PF00032">
    <property type="entry name" value="Cytochrom_B_C"/>
    <property type="match status" value="1"/>
</dbReference>
<dbReference type="Pfam" id="PF00033">
    <property type="entry name" value="Cytochrome_B"/>
    <property type="match status" value="1"/>
</dbReference>
<dbReference type="PIRSF" id="PIRSF038885">
    <property type="entry name" value="COB"/>
    <property type="match status" value="1"/>
</dbReference>
<dbReference type="SUPFAM" id="SSF81648">
    <property type="entry name" value="a domain/subunit of cytochrome bc1 complex (Ubiquinol-cytochrome c reductase)"/>
    <property type="match status" value="1"/>
</dbReference>
<dbReference type="SUPFAM" id="SSF81342">
    <property type="entry name" value="Transmembrane di-heme cytochromes"/>
    <property type="match status" value="1"/>
</dbReference>
<dbReference type="PROSITE" id="PS51003">
    <property type="entry name" value="CYTB_CTER"/>
    <property type="match status" value="1"/>
</dbReference>
<dbReference type="PROSITE" id="PS51002">
    <property type="entry name" value="CYTB_NTER"/>
    <property type="match status" value="1"/>
</dbReference>
<keyword id="KW-0249">Electron transport</keyword>
<keyword id="KW-0349">Heme</keyword>
<keyword id="KW-0408">Iron</keyword>
<keyword id="KW-0472">Membrane</keyword>
<keyword id="KW-0479">Metal-binding</keyword>
<keyword id="KW-0496">Mitochondrion</keyword>
<keyword id="KW-0999">Mitochondrion inner membrane</keyword>
<keyword id="KW-0679">Respiratory chain</keyword>
<keyword id="KW-0812">Transmembrane</keyword>
<keyword id="KW-1133">Transmembrane helix</keyword>
<keyword id="KW-0813">Transport</keyword>
<keyword id="KW-0830">Ubiquinone</keyword>
<organism>
    <name type="scientific">Trinomys iheringi</name>
    <name type="common">Ihering's Atlantic spiny rat</name>
    <name type="synonym">Proechimys iheringi</name>
    <dbReference type="NCBI Taxonomy" id="42830"/>
    <lineage>
        <taxon>Eukaryota</taxon>
        <taxon>Metazoa</taxon>
        <taxon>Chordata</taxon>
        <taxon>Craniata</taxon>
        <taxon>Vertebrata</taxon>
        <taxon>Euteleostomi</taxon>
        <taxon>Mammalia</taxon>
        <taxon>Eutheria</taxon>
        <taxon>Euarchontoglires</taxon>
        <taxon>Glires</taxon>
        <taxon>Rodentia</taxon>
        <taxon>Hystricomorpha</taxon>
        <taxon>Echimyidae</taxon>
        <taxon>Trinomys</taxon>
    </lineage>
</organism>
<protein>
    <recommendedName>
        <fullName>Cytochrome b</fullName>
    </recommendedName>
    <alternativeName>
        <fullName>Complex III subunit 3</fullName>
    </alternativeName>
    <alternativeName>
        <fullName>Complex III subunit III</fullName>
    </alternativeName>
    <alternativeName>
        <fullName>Cytochrome b-c1 complex subunit 3</fullName>
    </alternativeName>
    <alternativeName>
        <fullName>Ubiquinol-cytochrome-c reductase complex cytochrome b subunit</fullName>
    </alternativeName>
</protein>
<gene>
    <name type="primary">MT-CYB</name>
    <name type="synonym">COB</name>
    <name type="synonym">CYTB</name>
    <name type="synonym">MTCYB</name>
</gene>
<reference key="1">
    <citation type="journal article" date="1996" name="Mol. Phylogenet. Evol.">
        <title>The simultaneous diversification of South American echimyid rodents (Hystricognathi) based on complete cytochrome b sequences.</title>
        <authorList>
            <person name="Lara M.C."/>
            <person name="Patton J.L."/>
            <person name="da Silva M.N.F."/>
        </authorList>
    </citation>
    <scope>NUCLEOTIDE SEQUENCE [GENOMIC DNA]</scope>
</reference>
<proteinExistence type="inferred from homology"/>
<sequence>MTNMRKSHPLIKIINHSFIDLPAPSNISAWWNFGSLLGVCLTLQIITGLFLAMHYTADTTTAFSSVTHICRDVNYGWLIRYTXANGASMFFILLYFHIGRGIYYGSYTFMETWNIGVLLLLLVMATAFMGYVLPWGQMSFWGATVITNLLSAIPYIGFTLVEWIWGGFSVDKATLTRFFALHFILPFIITATAAIHLLFLHETGSNNPSGLNSDSDKIPFHPYYTIKDILGLLIMLMVLLTLILFSPDLLGDPDNYTPANPLNTPPHIKPEWYFLFAYAILRSIPNKLGGVLALAFSIVILALFPALHMSKQRSMSFRPMSQCLLWALVANLIILTWIGGQPVEHPFIMIGQLASISYFCIILILMPTTSLMENKMLKW</sequence>